<name>ATP6_HISS2</name>
<reference key="1">
    <citation type="submission" date="2008-02" db="EMBL/GenBank/DDBJ databases">
        <title>Complete sequence of Haemophilus somnus 2336.</title>
        <authorList>
            <consortium name="US DOE Joint Genome Institute"/>
            <person name="Siddaramappa S."/>
            <person name="Duncan A.J."/>
            <person name="Challacombe J.F."/>
            <person name="Rainey D."/>
            <person name="Gillaspy A.F."/>
            <person name="Carson M."/>
            <person name="Gipson J."/>
            <person name="Gipson M."/>
            <person name="Bruce D."/>
            <person name="Detter J.C."/>
            <person name="Han C.S."/>
            <person name="Land M."/>
            <person name="Tapia R."/>
            <person name="Thompson L.S."/>
            <person name="Orvis J."/>
            <person name="Zaitshik J."/>
            <person name="Barnes G."/>
            <person name="Brettin T.S."/>
            <person name="Dyer D.W."/>
            <person name="Inzana T.J."/>
        </authorList>
    </citation>
    <scope>NUCLEOTIDE SEQUENCE [LARGE SCALE GENOMIC DNA]</scope>
    <source>
        <strain>2336</strain>
    </source>
</reference>
<evidence type="ECO:0000255" key="1">
    <source>
        <dbReference type="HAMAP-Rule" id="MF_01393"/>
    </source>
</evidence>
<accession>B0UWH1</accession>
<protein>
    <recommendedName>
        <fullName evidence="1">ATP synthase subunit a</fullName>
    </recommendedName>
    <alternativeName>
        <fullName evidence="1">ATP synthase F0 sector subunit a</fullName>
    </alternativeName>
    <alternativeName>
        <fullName evidence="1">F-ATPase subunit 6</fullName>
    </alternativeName>
</protein>
<organism>
    <name type="scientific">Histophilus somni (strain 2336)</name>
    <name type="common">Haemophilus somnus</name>
    <dbReference type="NCBI Taxonomy" id="228400"/>
    <lineage>
        <taxon>Bacteria</taxon>
        <taxon>Pseudomonadati</taxon>
        <taxon>Pseudomonadota</taxon>
        <taxon>Gammaproteobacteria</taxon>
        <taxon>Pasteurellales</taxon>
        <taxon>Pasteurellaceae</taxon>
        <taxon>Histophilus</taxon>
    </lineage>
</organism>
<dbReference type="EMBL" id="CP000947">
    <property type="protein sequence ID" value="ACA31645.1"/>
    <property type="molecule type" value="Genomic_DNA"/>
</dbReference>
<dbReference type="RefSeq" id="WP_012340946.1">
    <property type="nucleotide sequence ID" value="NC_010519.1"/>
</dbReference>
<dbReference type="SMR" id="B0UWH1"/>
<dbReference type="STRING" id="228400.HSM_1856"/>
<dbReference type="GeneID" id="31488163"/>
<dbReference type="KEGG" id="hsm:HSM_1856"/>
<dbReference type="HOGENOM" id="CLU_041018_1_0_6"/>
<dbReference type="GO" id="GO:0005886">
    <property type="term" value="C:plasma membrane"/>
    <property type="evidence" value="ECO:0007669"/>
    <property type="project" value="UniProtKB-SubCell"/>
</dbReference>
<dbReference type="GO" id="GO:0045259">
    <property type="term" value="C:proton-transporting ATP synthase complex"/>
    <property type="evidence" value="ECO:0007669"/>
    <property type="project" value="UniProtKB-KW"/>
</dbReference>
<dbReference type="GO" id="GO:0046933">
    <property type="term" value="F:proton-transporting ATP synthase activity, rotational mechanism"/>
    <property type="evidence" value="ECO:0007669"/>
    <property type="project" value="UniProtKB-UniRule"/>
</dbReference>
<dbReference type="GO" id="GO:0042777">
    <property type="term" value="P:proton motive force-driven plasma membrane ATP synthesis"/>
    <property type="evidence" value="ECO:0007669"/>
    <property type="project" value="TreeGrafter"/>
</dbReference>
<dbReference type="CDD" id="cd00310">
    <property type="entry name" value="ATP-synt_Fo_a_6"/>
    <property type="match status" value="1"/>
</dbReference>
<dbReference type="FunFam" id="1.20.120.220:FF:000002">
    <property type="entry name" value="ATP synthase subunit a"/>
    <property type="match status" value="1"/>
</dbReference>
<dbReference type="Gene3D" id="1.20.120.220">
    <property type="entry name" value="ATP synthase, F0 complex, subunit A"/>
    <property type="match status" value="1"/>
</dbReference>
<dbReference type="HAMAP" id="MF_01393">
    <property type="entry name" value="ATP_synth_a_bact"/>
    <property type="match status" value="1"/>
</dbReference>
<dbReference type="InterPro" id="IPR045082">
    <property type="entry name" value="ATP_syn_F0_a_bact/chloroplast"/>
</dbReference>
<dbReference type="InterPro" id="IPR000568">
    <property type="entry name" value="ATP_synth_F0_asu"/>
</dbReference>
<dbReference type="InterPro" id="IPR023011">
    <property type="entry name" value="ATP_synth_F0_asu_AS"/>
</dbReference>
<dbReference type="InterPro" id="IPR035908">
    <property type="entry name" value="F0_ATP_A_sf"/>
</dbReference>
<dbReference type="NCBIfam" id="TIGR01131">
    <property type="entry name" value="ATP_synt_6_or_A"/>
    <property type="match status" value="1"/>
</dbReference>
<dbReference type="NCBIfam" id="NF004477">
    <property type="entry name" value="PRK05815.1-1"/>
    <property type="match status" value="1"/>
</dbReference>
<dbReference type="PANTHER" id="PTHR42823">
    <property type="entry name" value="ATP SYNTHASE SUBUNIT A, CHLOROPLASTIC"/>
    <property type="match status" value="1"/>
</dbReference>
<dbReference type="PANTHER" id="PTHR42823:SF3">
    <property type="entry name" value="ATP SYNTHASE SUBUNIT A, CHLOROPLASTIC"/>
    <property type="match status" value="1"/>
</dbReference>
<dbReference type="Pfam" id="PF00119">
    <property type="entry name" value="ATP-synt_A"/>
    <property type="match status" value="1"/>
</dbReference>
<dbReference type="PRINTS" id="PR00123">
    <property type="entry name" value="ATPASEA"/>
</dbReference>
<dbReference type="SUPFAM" id="SSF81336">
    <property type="entry name" value="F1F0 ATP synthase subunit A"/>
    <property type="match status" value="1"/>
</dbReference>
<dbReference type="PROSITE" id="PS00449">
    <property type="entry name" value="ATPASE_A"/>
    <property type="match status" value="1"/>
</dbReference>
<keyword id="KW-0066">ATP synthesis</keyword>
<keyword id="KW-0997">Cell inner membrane</keyword>
<keyword id="KW-1003">Cell membrane</keyword>
<keyword id="KW-0138">CF(0)</keyword>
<keyword id="KW-0375">Hydrogen ion transport</keyword>
<keyword id="KW-0406">Ion transport</keyword>
<keyword id="KW-0472">Membrane</keyword>
<keyword id="KW-0812">Transmembrane</keyword>
<keyword id="KW-1133">Transmembrane helix</keyword>
<keyword id="KW-0813">Transport</keyword>
<feature type="chain" id="PRO_0000362324" description="ATP synthase subunit a">
    <location>
        <begin position="1"/>
        <end position="265"/>
    </location>
</feature>
<feature type="transmembrane region" description="Helical" evidence="1">
    <location>
        <begin position="26"/>
        <end position="46"/>
    </location>
</feature>
<feature type="transmembrane region" description="Helical" evidence="1">
    <location>
        <begin position="88"/>
        <end position="108"/>
    </location>
</feature>
<feature type="transmembrane region" description="Helical" evidence="1">
    <location>
        <begin position="132"/>
        <end position="152"/>
    </location>
</feature>
<feature type="transmembrane region" description="Helical" evidence="1">
    <location>
        <begin position="168"/>
        <end position="188"/>
    </location>
</feature>
<feature type="transmembrane region" description="Helical" evidence="1">
    <location>
        <begin position="195"/>
        <end position="217"/>
    </location>
</feature>
<feature type="transmembrane region" description="Helical" evidence="1">
    <location>
        <begin position="231"/>
        <end position="251"/>
    </location>
</feature>
<proteinExistence type="inferred from homology"/>
<comment type="function">
    <text evidence="1">Key component of the proton channel; it plays a direct role in the translocation of protons across the membrane.</text>
</comment>
<comment type="subunit">
    <text evidence="1">F-type ATPases have 2 components, CF(1) - the catalytic core - and CF(0) - the membrane proton channel. CF(1) has five subunits: alpha(3), beta(3), gamma(1), delta(1), epsilon(1). CF(0) has three main subunits: a(1), b(2) and c(9-12). The alpha and beta chains form an alternating ring which encloses part of the gamma chain. CF(1) is attached to CF(0) by a central stalk formed by the gamma and epsilon chains, while a peripheral stalk is formed by the delta and b chains.</text>
</comment>
<comment type="subcellular location">
    <subcellularLocation>
        <location evidence="1">Cell inner membrane</location>
        <topology evidence="1">Multi-pass membrane protein</topology>
    </subcellularLocation>
</comment>
<comment type="similarity">
    <text evidence="1">Belongs to the ATPase A chain family.</text>
</comment>
<sequence length="265" mass="29741">MAGHTTADYISHHLTFLTTGQGFWNVHLDTLFFSLVSGVLFLFFFYRIASKATSGVPGKFQCLVEMLVEWVDGVVKDNIHGSDVRHQIGSLALTIFCWVFIMNAIDLIPVDFPPQFAELLGIHYLRAVPTADISATLGMSVCVFALIIFYTIKSKGLGGFVKEYTLHPFNHWAFIPVNFLLEAVTLLAKPISLAFRLFGNMYAGELIFVLIAVMYMADNIIPQVLGIPLHLIWAIFHILVITLQAFIFMMLTVVYLSIAYNKSDH</sequence>
<gene>
    <name evidence="1" type="primary">atpB</name>
    <name type="ordered locus">HSM_1856</name>
</gene>